<reference key="1">
    <citation type="journal article" date="2000" name="FEBS Lett.">
        <title>Inteins invading mycobacterial RecA proteins.</title>
        <authorList>
            <person name="Saves I."/>
            <person name="Laneelle M.-A."/>
            <person name="Daffe M."/>
            <person name="Masson J.-M."/>
        </authorList>
    </citation>
    <scope>NUCLEOTIDE SEQUENCE [GENOMIC DNA]</scope>
    <source>
        <strain>IP14116003</strain>
    </source>
</reference>
<organism>
    <name type="scientific">Mycolicibacterium chitae</name>
    <name type="common">Mycobacterium chitae</name>
    <dbReference type="NCBI Taxonomy" id="1792"/>
    <lineage>
        <taxon>Bacteria</taxon>
        <taxon>Bacillati</taxon>
        <taxon>Actinomycetota</taxon>
        <taxon>Actinomycetes</taxon>
        <taxon>Mycobacteriales</taxon>
        <taxon>Mycobacteriaceae</taxon>
        <taxon>Mycolicibacterium</taxon>
    </lineage>
</organism>
<keyword id="KW-0067">ATP-binding</keyword>
<keyword id="KW-0068">Autocatalytic cleavage</keyword>
<keyword id="KW-0963">Cytoplasm</keyword>
<keyword id="KW-0227">DNA damage</keyword>
<keyword id="KW-0233">DNA recombination</keyword>
<keyword id="KW-0234">DNA repair</keyword>
<keyword id="KW-0238">DNA-binding</keyword>
<keyword id="KW-0547">Nucleotide-binding</keyword>
<keyword id="KW-0651">Protein splicing</keyword>
<keyword id="KW-0742">SOS response</keyword>
<dbReference type="EMBL" id="AJ251336">
    <property type="protein sequence ID" value="CAC09588.1"/>
    <property type="molecule type" value="Genomic_DNA"/>
</dbReference>
<dbReference type="GO" id="GO:0005829">
    <property type="term" value="C:cytosol"/>
    <property type="evidence" value="ECO:0007669"/>
    <property type="project" value="TreeGrafter"/>
</dbReference>
<dbReference type="GO" id="GO:0005524">
    <property type="term" value="F:ATP binding"/>
    <property type="evidence" value="ECO:0007669"/>
    <property type="project" value="UniProtKB-KW"/>
</dbReference>
<dbReference type="GO" id="GO:0008094">
    <property type="term" value="F:ATP-dependent activity, acting on DNA"/>
    <property type="evidence" value="ECO:0007669"/>
    <property type="project" value="InterPro"/>
</dbReference>
<dbReference type="GO" id="GO:0004519">
    <property type="term" value="F:endonuclease activity"/>
    <property type="evidence" value="ECO:0007669"/>
    <property type="project" value="InterPro"/>
</dbReference>
<dbReference type="GO" id="GO:0003697">
    <property type="term" value="F:single-stranded DNA binding"/>
    <property type="evidence" value="ECO:0007669"/>
    <property type="project" value="InterPro"/>
</dbReference>
<dbReference type="GO" id="GO:0006310">
    <property type="term" value="P:DNA recombination"/>
    <property type="evidence" value="ECO:0007669"/>
    <property type="project" value="UniProtKB-KW"/>
</dbReference>
<dbReference type="GO" id="GO:0006281">
    <property type="term" value="P:DNA repair"/>
    <property type="evidence" value="ECO:0007669"/>
    <property type="project" value="UniProtKB-KW"/>
</dbReference>
<dbReference type="GO" id="GO:0016539">
    <property type="term" value="P:intein-mediated protein splicing"/>
    <property type="evidence" value="ECO:0007669"/>
    <property type="project" value="InterPro"/>
</dbReference>
<dbReference type="GO" id="GO:0009432">
    <property type="term" value="P:SOS response"/>
    <property type="evidence" value="ECO:0007669"/>
    <property type="project" value="UniProtKB-KW"/>
</dbReference>
<dbReference type="CDD" id="cd00081">
    <property type="entry name" value="Hint"/>
    <property type="match status" value="1"/>
</dbReference>
<dbReference type="Gene3D" id="2.170.16.10">
    <property type="entry name" value="Hedgehog/Intein (Hint) domain"/>
    <property type="match status" value="1"/>
</dbReference>
<dbReference type="Gene3D" id="3.10.28.10">
    <property type="entry name" value="Homing endonucleases"/>
    <property type="match status" value="2"/>
</dbReference>
<dbReference type="Gene3D" id="3.40.50.300">
    <property type="entry name" value="P-loop containing nucleotide triphosphate hydrolases"/>
    <property type="match status" value="1"/>
</dbReference>
<dbReference type="InterPro" id="IPR013765">
    <property type="entry name" value="DNA_recomb/repair_RecA"/>
</dbReference>
<dbReference type="InterPro" id="IPR020584">
    <property type="entry name" value="DNA_recomb/repair_RecA_CS"/>
</dbReference>
<dbReference type="InterPro" id="IPR003586">
    <property type="entry name" value="Hint_dom_C"/>
</dbReference>
<dbReference type="InterPro" id="IPR003587">
    <property type="entry name" value="Hint_dom_N"/>
</dbReference>
<dbReference type="InterPro" id="IPR036844">
    <property type="entry name" value="Hint_dom_sf"/>
</dbReference>
<dbReference type="InterPro" id="IPR027434">
    <property type="entry name" value="Homing_endonucl"/>
</dbReference>
<dbReference type="InterPro" id="IPR006142">
    <property type="entry name" value="INTEIN"/>
</dbReference>
<dbReference type="InterPro" id="IPR030934">
    <property type="entry name" value="Intein_C"/>
</dbReference>
<dbReference type="InterPro" id="IPR006141">
    <property type="entry name" value="Intein_N"/>
</dbReference>
<dbReference type="InterPro" id="IPR004860">
    <property type="entry name" value="LAGLIDADG_dom"/>
</dbReference>
<dbReference type="InterPro" id="IPR027417">
    <property type="entry name" value="P-loop_NTPase"/>
</dbReference>
<dbReference type="InterPro" id="IPR049428">
    <property type="entry name" value="RecA-like_N"/>
</dbReference>
<dbReference type="InterPro" id="IPR020587">
    <property type="entry name" value="RecA_monomer-monomer_interface"/>
</dbReference>
<dbReference type="NCBIfam" id="TIGR01443">
    <property type="entry name" value="intein_Cterm"/>
    <property type="match status" value="1"/>
</dbReference>
<dbReference type="NCBIfam" id="TIGR01445">
    <property type="entry name" value="intein_Nterm"/>
    <property type="match status" value="1"/>
</dbReference>
<dbReference type="PANTHER" id="PTHR45900:SF1">
    <property type="entry name" value="MITOCHONDRIAL DNA REPAIR PROTEIN RECA HOMOLOG-RELATED"/>
    <property type="match status" value="1"/>
</dbReference>
<dbReference type="PANTHER" id="PTHR45900">
    <property type="entry name" value="RECA"/>
    <property type="match status" value="1"/>
</dbReference>
<dbReference type="Pfam" id="PF03161">
    <property type="entry name" value="LAGLIDADG_2"/>
    <property type="match status" value="1"/>
</dbReference>
<dbReference type="Pfam" id="PF00154">
    <property type="entry name" value="RecA"/>
    <property type="match status" value="1"/>
</dbReference>
<dbReference type="PRINTS" id="PR00379">
    <property type="entry name" value="INTEIN"/>
</dbReference>
<dbReference type="PRINTS" id="PR00142">
    <property type="entry name" value="RECA"/>
</dbReference>
<dbReference type="SMART" id="SM00305">
    <property type="entry name" value="HintC"/>
    <property type="match status" value="1"/>
</dbReference>
<dbReference type="SMART" id="SM00306">
    <property type="entry name" value="HintN"/>
    <property type="match status" value="1"/>
</dbReference>
<dbReference type="SUPFAM" id="SSF51294">
    <property type="entry name" value="Hedgehog/intein (Hint) domain"/>
    <property type="match status" value="1"/>
</dbReference>
<dbReference type="SUPFAM" id="SSF55608">
    <property type="entry name" value="Homing endonucleases"/>
    <property type="match status" value="1"/>
</dbReference>
<dbReference type="SUPFAM" id="SSF52540">
    <property type="entry name" value="P-loop containing nucleoside triphosphate hydrolases"/>
    <property type="match status" value="1"/>
</dbReference>
<dbReference type="PROSITE" id="PS50818">
    <property type="entry name" value="INTEIN_C_TER"/>
    <property type="match status" value="1"/>
</dbReference>
<dbReference type="PROSITE" id="PS50817">
    <property type="entry name" value="INTEIN_N_TER"/>
    <property type="match status" value="1"/>
</dbReference>
<dbReference type="PROSITE" id="PS00321">
    <property type="entry name" value="RECA_1"/>
    <property type="match status" value="1"/>
</dbReference>
<dbReference type="PROSITE" id="PS50163">
    <property type="entry name" value="RECA_3"/>
    <property type="match status" value="1"/>
</dbReference>
<name>RECA_MYCCI</name>
<feature type="chain" id="PRO_0000030248" description="Protein RecA, 1st part" evidence="2">
    <location>
        <begin position="1" status="less than"/>
        <end position="9"/>
    </location>
</feature>
<feature type="chain" id="PRO_0000030249" description="Mch RecA intein" evidence="2">
    <location>
        <begin position="10"/>
        <end position="373"/>
    </location>
</feature>
<feature type="chain" id="PRO_0000030250" description="Protein RecA, 2nd part" evidence="2">
    <location>
        <begin position="374"/>
        <end position="423" status="greater than"/>
    </location>
</feature>
<feature type="non-terminal residue">
    <location>
        <position position="1"/>
    </location>
</feature>
<feature type="non-terminal residue">
    <location>
        <position position="423"/>
    </location>
</feature>
<protein>
    <recommendedName>
        <fullName>Protein RecA</fullName>
    </recommendedName>
    <alternativeName>
        <fullName>Recombinase A</fullName>
    </alternativeName>
    <component>
        <recommendedName>
            <fullName>Mch RecA intein</fullName>
        </recommendedName>
    </component>
</protein>
<gene>
    <name type="primary">recA</name>
</gene>
<sequence>REKIGVMFGCFNYSTRVQLADGTTEKIGKIVNNKMDVEVLSYDPVADQVVPRKVVNWFNNGPAEQFLQFTVEKSGGNGRSQFAATPNHLIRTPAGWSEAGDLIAGDRVMASEPHRLSDQQFQVVLGSLMGDGNLSPNRRDRNGVRFRMGHGAKQGDYLQWKTDLLANIAHSAHENAKGARFVDFTPLPELAELQRAVYLGDGKKFLSEEYLKALTPLALAIWYMDDGGFTVRSKGLQQRTEGGSGRIEICVEAMSVGSRDRLRDYLRDTHGLDVRLRHAGAAGKAMLVFTTAASAKFQEIVAPYMAPSMEYKLLPRFRGQGTVAPQFVEPTERLVPARILDIHVKPHTRSMNRFDIEVEGNHNYFVDGVMVHNSPETTTGGKALKFYASVRIDVRRIETLKDGTDAVGNRTRAKIVKNKVSPP</sequence>
<proteinExistence type="inferred from homology"/>
<evidence type="ECO:0000250" key="1"/>
<evidence type="ECO:0000255" key="2"/>
<evidence type="ECO:0000305" key="3"/>
<accession>Q9F417</accession>
<comment type="function">
    <text evidence="1">Can catalyze the hydrolysis of ATP in the presence of single-stranded DNA, the ATP-dependent uptake of single-stranded DNA by duplex DNA, and the ATP-dependent hybridization of homologous single-stranded DNAs. It interacts with LexA causing its activation and leading to its autocatalytic cleavage (By similarity).</text>
</comment>
<comment type="subcellular location">
    <subcellularLocation>
        <location evidence="1">Cytoplasm</location>
    </subcellularLocation>
</comment>
<comment type="PTM">
    <text evidence="1">This protein undergoes a protein self splicing that involves a post-translational excision of the intervening region (intein) followed by peptide ligation.</text>
</comment>
<comment type="similarity">
    <text evidence="3">Belongs to the RecA family.</text>
</comment>